<protein>
    <recommendedName>
        <fullName evidence="1">DNA polymerase IV</fullName>
        <shortName evidence="1">Pol IV</shortName>
        <ecNumber evidence="1">2.7.7.7</ecNumber>
    </recommendedName>
</protein>
<feature type="chain" id="PRO_0000173922" description="DNA polymerase IV">
    <location>
        <begin position="1"/>
        <end position="356"/>
    </location>
</feature>
<feature type="domain" description="UmuC" evidence="1">
    <location>
        <begin position="1"/>
        <end position="188"/>
    </location>
</feature>
<feature type="active site" evidence="1">
    <location>
        <position position="107"/>
    </location>
</feature>
<feature type="binding site" evidence="1">
    <location>
        <position position="11"/>
    </location>
    <ligand>
        <name>Mg(2+)</name>
        <dbReference type="ChEBI" id="CHEBI:18420"/>
    </ligand>
</feature>
<feature type="binding site" evidence="1">
    <location>
        <position position="106"/>
    </location>
    <ligand>
        <name>Mg(2+)</name>
        <dbReference type="ChEBI" id="CHEBI:18420"/>
    </ligand>
</feature>
<feature type="site" description="Substrate discrimination" evidence="1">
    <location>
        <position position="16"/>
    </location>
</feature>
<organism>
    <name type="scientific">Listeria monocytogenes serotype 4b (strain F2365)</name>
    <dbReference type="NCBI Taxonomy" id="265669"/>
    <lineage>
        <taxon>Bacteria</taxon>
        <taxon>Bacillati</taxon>
        <taxon>Bacillota</taxon>
        <taxon>Bacilli</taxon>
        <taxon>Bacillales</taxon>
        <taxon>Listeriaceae</taxon>
        <taxon>Listeria</taxon>
    </lineage>
</organism>
<sequence>MDTSRKIIHIDMDAFYASVEQRDHPEFRGKPLIIGGDPNKRGVVATCSYEARKFGVHSAMPTRQAAKLCPNGIFIHGNMAHYVEVSNQIREIFSRYTDIIEPLSLDEAYLDVTENKKGMKSATMVAREIQQTIYQELGLTASAGVSFNKFIAKIASDFKKPAGITVVTPEEAEAFLEQIPVTKFYGVGKVTAEKLHRLGIETGADLKKWSEWDLIRELHKHGYHLYRHVRGRSNNIVNPHRDRKSVGKETTFEFNVLDSRVLEQSLMQFAKKVEERLIKLQKHGKTVVLKLRYSDFTTITKRLTLNEYTNDTSQIYQAAALLLRESYTGQDSIRLIGLTVTNLKPVYFENLRLEGL</sequence>
<dbReference type="EC" id="2.7.7.7" evidence="1"/>
<dbReference type="EMBL" id="AE017262">
    <property type="protein sequence ID" value="AAT04768.1"/>
    <property type="molecule type" value="Genomic_DNA"/>
</dbReference>
<dbReference type="RefSeq" id="WP_010958976.1">
    <property type="nucleotide sequence ID" value="NC_002973.6"/>
</dbReference>
<dbReference type="SMR" id="Q71Y46"/>
<dbReference type="KEGG" id="lmf:LMOf2365_1998"/>
<dbReference type="HOGENOM" id="CLU_012348_1_2_9"/>
<dbReference type="GO" id="GO:0005829">
    <property type="term" value="C:cytosol"/>
    <property type="evidence" value="ECO:0007669"/>
    <property type="project" value="TreeGrafter"/>
</dbReference>
<dbReference type="GO" id="GO:0003684">
    <property type="term" value="F:damaged DNA binding"/>
    <property type="evidence" value="ECO:0007669"/>
    <property type="project" value="InterPro"/>
</dbReference>
<dbReference type="GO" id="GO:0003887">
    <property type="term" value="F:DNA-directed DNA polymerase activity"/>
    <property type="evidence" value="ECO:0007669"/>
    <property type="project" value="UniProtKB-UniRule"/>
</dbReference>
<dbReference type="GO" id="GO:0000287">
    <property type="term" value="F:magnesium ion binding"/>
    <property type="evidence" value="ECO:0007669"/>
    <property type="project" value="UniProtKB-UniRule"/>
</dbReference>
<dbReference type="GO" id="GO:0006261">
    <property type="term" value="P:DNA-templated DNA replication"/>
    <property type="evidence" value="ECO:0007669"/>
    <property type="project" value="UniProtKB-UniRule"/>
</dbReference>
<dbReference type="GO" id="GO:0042276">
    <property type="term" value="P:error-prone translesion synthesis"/>
    <property type="evidence" value="ECO:0007669"/>
    <property type="project" value="TreeGrafter"/>
</dbReference>
<dbReference type="GO" id="GO:0009432">
    <property type="term" value="P:SOS response"/>
    <property type="evidence" value="ECO:0007669"/>
    <property type="project" value="TreeGrafter"/>
</dbReference>
<dbReference type="CDD" id="cd03586">
    <property type="entry name" value="PolY_Pol_IV_kappa"/>
    <property type="match status" value="1"/>
</dbReference>
<dbReference type="FunFam" id="1.10.150.20:FF:000062">
    <property type="entry name" value="DNA polymerase IV"/>
    <property type="match status" value="1"/>
</dbReference>
<dbReference type="FunFam" id="3.30.1490.100:FF:000004">
    <property type="entry name" value="DNA polymerase IV"/>
    <property type="match status" value="1"/>
</dbReference>
<dbReference type="FunFam" id="3.30.70.270:FF:000002">
    <property type="entry name" value="DNA polymerase IV"/>
    <property type="match status" value="1"/>
</dbReference>
<dbReference type="FunFam" id="3.40.1170.60:FF:000001">
    <property type="entry name" value="DNA polymerase IV"/>
    <property type="match status" value="1"/>
</dbReference>
<dbReference type="Gene3D" id="3.30.70.270">
    <property type="match status" value="1"/>
</dbReference>
<dbReference type="Gene3D" id="3.40.1170.60">
    <property type="match status" value="1"/>
</dbReference>
<dbReference type="Gene3D" id="1.10.150.20">
    <property type="entry name" value="5' to 3' exonuclease, C-terminal subdomain"/>
    <property type="match status" value="1"/>
</dbReference>
<dbReference type="Gene3D" id="3.30.1490.100">
    <property type="entry name" value="DNA polymerase, Y-family, little finger domain"/>
    <property type="match status" value="1"/>
</dbReference>
<dbReference type="HAMAP" id="MF_01113">
    <property type="entry name" value="DNApol_IV"/>
    <property type="match status" value="1"/>
</dbReference>
<dbReference type="InterPro" id="IPR043502">
    <property type="entry name" value="DNA/RNA_pol_sf"/>
</dbReference>
<dbReference type="InterPro" id="IPR036775">
    <property type="entry name" value="DNA_pol_Y-fam_lit_finger_sf"/>
</dbReference>
<dbReference type="InterPro" id="IPR017961">
    <property type="entry name" value="DNA_pol_Y-fam_little_finger"/>
</dbReference>
<dbReference type="InterPro" id="IPR050116">
    <property type="entry name" value="DNA_polymerase-Y"/>
</dbReference>
<dbReference type="InterPro" id="IPR022880">
    <property type="entry name" value="DNApol_IV"/>
</dbReference>
<dbReference type="InterPro" id="IPR024728">
    <property type="entry name" value="PolY_HhH_motif"/>
</dbReference>
<dbReference type="InterPro" id="IPR043128">
    <property type="entry name" value="Rev_trsase/Diguanyl_cyclase"/>
</dbReference>
<dbReference type="InterPro" id="IPR001126">
    <property type="entry name" value="UmuC"/>
</dbReference>
<dbReference type="NCBIfam" id="NF002677">
    <property type="entry name" value="PRK02406.1"/>
    <property type="match status" value="1"/>
</dbReference>
<dbReference type="NCBIfam" id="NF010731">
    <property type="entry name" value="PRK14133.1"/>
    <property type="match status" value="1"/>
</dbReference>
<dbReference type="PANTHER" id="PTHR11076:SF33">
    <property type="entry name" value="DNA POLYMERASE KAPPA"/>
    <property type="match status" value="1"/>
</dbReference>
<dbReference type="PANTHER" id="PTHR11076">
    <property type="entry name" value="DNA REPAIR POLYMERASE UMUC / TRANSFERASE FAMILY MEMBER"/>
    <property type="match status" value="1"/>
</dbReference>
<dbReference type="Pfam" id="PF00817">
    <property type="entry name" value="IMS"/>
    <property type="match status" value="1"/>
</dbReference>
<dbReference type="Pfam" id="PF11799">
    <property type="entry name" value="IMS_C"/>
    <property type="match status" value="1"/>
</dbReference>
<dbReference type="Pfam" id="PF11798">
    <property type="entry name" value="IMS_HHH"/>
    <property type="match status" value="1"/>
</dbReference>
<dbReference type="SUPFAM" id="SSF56672">
    <property type="entry name" value="DNA/RNA polymerases"/>
    <property type="match status" value="1"/>
</dbReference>
<dbReference type="SUPFAM" id="SSF100879">
    <property type="entry name" value="Lesion bypass DNA polymerase (Y-family), little finger domain"/>
    <property type="match status" value="1"/>
</dbReference>
<dbReference type="PROSITE" id="PS50173">
    <property type="entry name" value="UMUC"/>
    <property type="match status" value="1"/>
</dbReference>
<name>DPO4_LISMF</name>
<gene>
    <name evidence="1" type="primary">dinB</name>
    <name type="ordered locus">LMOf2365_1998</name>
</gene>
<reference key="1">
    <citation type="journal article" date="2004" name="Nucleic Acids Res.">
        <title>Whole genome comparisons of serotype 4b and 1/2a strains of the food-borne pathogen Listeria monocytogenes reveal new insights into the core genome components of this species.</title>
        <authorList>
            <person name="Nelson K.E."/>
            <person name="Fouts D.E."/>
            <person name="Mongodin E.F."/>
            <person name="Ravel J."/>
            <person name="DeBoy R.T."/>
            <person name="Kolonay J.F."/>
            <person name="Rasko D.A."/>
            <person name="Angiuoli S.V."/>
            <person name="Gill S.R."/>
            <person name="Paulsen I.T."/>
            <person name="Peterson J.D."/>
            <person name="White O."/>
            <person name="Nelson W.C."/>
            <person name="Nierman W.C."/>
            <person name="Beanan M.J."/>
            <person name="Brinkac L.M."/>
            <person name="Daugherty S.C."/>
            <person name="Dodson R.J."/>
            <person name="Durkin A.S."/>
            <person name="Madupu R."/>
            <person name="Haft D.H."/>
            <person name="Selengut J."/>
            <person name="Van Aken S.E."/>
            <person name="Khouri H.M."/>
            <person name="Fedorova N."/>
            <person name="Forberger H.A."/>
            <person name="Tran B."/>
            <person name="Kathariou S."/>
            <person name="Wonderling L.D."/>
            <person name="Uhlich G.A."/>
            <person name="Bayles D.O."/>
            <person name="Luchansky J.B."/>
            <person name="Fraser C.M."/>
        </authorList>
    </citation>
    <scope>NUCLEOTIDE SEQUENCE [LARGE SCALE GENOMIC DNA]</scope>
    <source>
        <strain>F2365</strain>
    </source>
</reference>
<keyword id="KW-0963">Cytoplasm</keyword>
<keyword id="KW-0227">DNA damage</keyword>
<keyword id="KW-0234">DNA repair</keyword>
<keyword id="KW-0235">DNA replication</keyword>
<keyword id="KW-0238">DNA-binding</keyword>
<keyword id="KW-0239">DNA-directed DNA polymerase</keyword>
<keyword id="KW-0460">Magnesium</keyword>
<keyword id="KW-0479">Metal-binding</keyword>
<keyword id="KW-0515">Mutator protein</keyword>
<keyword id="KW-0548">Nucleotidyltransferase</keyword>
<keyword id="KW-0808">Transferase</keyword>
<proteinExistence type="inferred from homology"/>
<evidence type="ECO:0000255" key="1">
    <source>
        <dbReference type="HAMAP-Rule" id="MF_01113"/>
    </source>
</evidence>
<comment type="function">
    <text evidence="1">Poorly processive, error-prone DNA polymerase involved in untargeted mutagenesis. Copies undamaged DNA at stalled replication forks, which arise in vivo from mismatched or misaligned primer ends. These misaligned primers can be extended by PolIV. Exhibits no 3'-5' exonuclease (proofreading) activity. May be involved in translesional synthesis, in conjunction with the beta clamp from PolIII.</text>
</comment>
<comment type="catalytic activity">
    <reaction evidence="1">
        <text>DNA(n) + a 2'-deoxyribonucleoside 5'-triphosphate = DNA(n+1) + diphosphate</text>
        <dbReference type="Rhea" id="RHEA:22508"/>
        <dbReference type="Rhea" id="RHEA-COMP:17339"/>
        <dbReference type="Rhea" id="RHEA-COMP:17340"/>
        <dbReference type="ChEBI" id="CHEBI:33019"/>
        <dbReference type="ChEBI" id="CHEBI:61560"/>
        <dbReference type="ChEBI" id="CHEBI:173112"/>
        <dbReference type="EC" id="2.7.7.7"/>
    </reaction>
</comment>
<comment type="cofactor">
    <cofactor evidence="1">
        <name>Mg(2+)</name>
        <dbReference type="ChEBI" id="CHEBI:18420"/>
    </cofactor>
    <text evidence="1">Binds 2 magnesium ions per subunit.</text>
</comment>
<comment type="subunit">
    <text evidence="1">Monomer.</text>
</comment>
<comment type="subcellular location">
    <subcellularLocation>
        <location evidence="1">Cytoplasm</location>
    </subcellularLocation>
</comment>
<comment type="similarity">
    <text evidence="1">Belongs to the DNA polymerase type-Y family.</text>
</comment>
<accession>Q71Y46</accession>